<evidence type="ECO:0000255" key="1">
    <source>
        <dbReference type="HAMAP-Rule" id="MF_01395"/>
    </source>
</evidence>
<evidence type="ECO:0000255" key="2">
    <source>
        <dbReference type="PROSITE-ProRule" id="PRU01136"/>
    </source>
</evidence>
<reference key="1">
    <citation type="journal article" date="2010" name="J. Bacteriol.">
        <title>Complete genome sequence of Beijerinckia indica subsp. indica.</title>
        <authorList>
            <person name="Tamas I."/>
            <person name="Dedysh S.N."/>
            <person name="Liesack W."/>
            <person name="Stott M.B."/>
            <person name="Alam M."/>
            <person name="Murrell J.C."/>
            <person name="Dunfield P.F."/>
        </authorList>
    </citation>
    <scope>NUCLEOTIDE SEQUENCE [LARGE SCALE GENOMIC DNA]</scope>
    <source>
        <strain>ATCC 9039 / DSM 1715 / NCIMB 8712</strain>
    </source>
</reference>
<sequence>MNWISNVVPPKIRSFLRRDTPENLWIKCPESGELVFHKDLEANLFVIPGSGYHMYIAPKPRLDALFDEGVYETIPTPEVPLDPLKFRDVKRYTDRIKEYRQKTGAPDAVKLAYGKLQGLDAVVAVQDFAFLGGSLGMAAGEAVITGMQQALERQAPFIIFTASGGARMQEGMFSLMQMPRTTLMVQALREARLPYIVVLTHPTTGGVSASYAMLGDIQVAEPGAVIGFAGARVIEQTIHEHLPEGFQRAEYLQAHGMVDMVVRRHDLPAVLARLCAFLTNSPRRAPIPA</sequence>
<organism>
    <name type="scientific">Beijerinckia indica subsp. indica (strain ATCC 9039 / DSM 1715 / NCIMB 8712)</name>
    <dbReference type="NCBI Taxonomy" id="395963"/>
    <lineage>
        <taxon>Bacteria</taxon>
        <taxon>Pseudomonadati</taxon>
        <taxon>Pseudomonadota</taxon>
        <taxon>Alphaproteobacteria</taxon>
        <taxon>Hyphomicrobiales</taxon>
        <taxon>Beijerinckiaceae</taxon>
        <taxon>Beijerinckia</taxon>
    </lineage>
</organism>
<dbReference type="EC" id="2.1.3.15" evidence="1"/>
<dbReference type="EMBL" id="CP001016">
    <property type="protein sequence ID" value="ACB95610.1"/>
    <property type="molecule type" value="Genomic_DNA"/>
</dbReference>
<dbReference type="RefSeq" id="WP_012384966.1">
    <property type="nucleotide sequence ID" value="NC_010581.1"/>
</dbReference>
<dbReference type="SMR" id="B2IF45"/>
<dbReference type="STRING" id="395963.Bind_1987"/>
<dbReference type="KEGG" id="bid:Bind_1987"/>
<dbReference type="eggNOG" id="COG0777">
    <property type="taxonomic scope" value="Bacteria"/>
</dbReference>
<dbReference type="HOGENOM" id="CLU_015486_1_0_5"/>
<dbReference type="OrthoDB" id="9772975at2"/>
<dbReference type="UniPathway" id="UPA00655">
    <property type="reaction ID" value="UER00711"/>
</dbReference>
<dbReference type="Proteomes" id="UP000001695">
    <property type="component" value="Chromosome"/>
</dbReference>
<dbReference type="GO" id="GO:0009329">
    <property type="term" value="C:acetate CoA-transferase complex"/>
    <property type="evidence" value="ECO:0007669"/>
    <property type="project" value="TreeGrafter"/>
</dbReference>
<dbReference type="GO" id="GO:0003989">
    <property type="term" value="F:acetyl-CoA carboxylase activity"/>
    <property type="evidence" value="ECO:0007669"/>
    <property type="project" value="InterPro"/>
</dbReference>
<dbReference type="GO" id="GO:0005524">
    <property type="term" value="F:ATP binding"/>
    <property type="evidence" value="ECO:0007669"/>
    <property type="project" value="UniProtKB-KW"/>
</dbReference>
<dbReference type="GO" id="GO:0016743">
    <property type="term" value="F:carboxyl- or carbamoyltransferase activity"/>
    <property type="evidence" value="ECO:0007669"/>
    <property type="project" value="UniProtKB-UniRule"/>
</dbReference>
<dbReference type="GO" id="GO:0006633">
    <property type="term" value="P:fatty acid biosynthetic process"/>
    <property type="evidence" value="ECO:0007669"/>
    <property type="project" value="UniProtKB-KW"/>
</dbReference>
<dbReference type="GO" id="GO:2001295">
    <property type="term" value="P:malonyl-CoA biosynthetic process"/>
    <property type="evidence" value="ECO:0007669"/>
    <property type="project" value="UniProtKB-UniRule"/>
</dbReference>
<dbReference type="Gene3D" id="3.90.226.10">
    <property type="entry name" value="2-enoyl-CoA Hydratase, Chain A, domain 1"/>
    <property type="match status" value="1"/>
</dbReference>
<dbReference type="HAMAP" id="MF_01395">
    <property type="entry name" value="AcetylCoA_CT_beta"/>
    <property type="match status" value="1"/>
</dbReference>
<dbReference type="InterPro" id="IPR034733">
    <property type="entry name" value="AcCoA_carboxyl_beta"/>
</dbReference>
<dbReference type="InterPro" id="IPR000438">
    <property type="entry name" value="Acetyl_CoA_COase_Trfase_b_su"/>
</dbReference>
<dbReference type="InterPro" id="IPR029045">
    <property type="entry name" value="ClpP/crotonase-like_dom_sf"/>
</dbReference>
<dbReference type="InterPro" id="IPR011762">
    <property type="entry name" value="COA_CT_N"/>
</dbReference>
<dbReference type="NCBIfam" id="TIGR00515">
    <property type="entry name" value="accD"/>
    <property type="match status" value="1"/>
</dbReference>
<dbReference type="PANTHER" id="PTHR42995">
    <property type="entry name" value="ACETYL-COENZYME A CARBOXYLASE CARBOXYL TRANSFERASE SUBUNIT BETA, CHLOROPLASTIC"/>
    <property type="match status" value="1"/>
</dbReference>
<dbReference type="PANTHER" id="PTHR42995:SF5">
    <property type="entry name" value="ACETYL-COENZYME A CARBOXYLASE CARBOXYL TRANSFERASE SUBUNIT BETA, CHLOROPLASTIC"/>
    <property type="match status" value="1"/>
</dbReference>
<dbReference type="Pfam" id="PF01039">
    <property type="entry name" value="Carboxyl_trans"/>
    <property type="match status" value="1"/>
</dbReference>
<dbReference type="PRINTS" id="PR01070">
    <property type="entry name" value="ACCCTRFRASEB"/>
</dbReference>
<dbReference type="SUPFAM" id="SSF52096">
    <property type="entry name" value="ClpP/crotonase"/>
    <property type="match status" value="1"/>
</dbReference>
<dbReference type="PROSITE" id="PS50980">
    <property type="entry name" value="COA_CT_NTER"/>
    <property type="match status" value="1"/>
</dbReference>
<proteinExistence type="inferred from homology"/>
<comment type="function">
    <text evidence="1">Component of the acetyl coenzyme A carboxylase (ACC) complex. Biotin carboxylase (BC) catalyzes the carboxylation of biotin on its carrier protein (BCCP) and then the CO(2) group is transferred by the transcarboxylase to acetyl-CoA to form malonyl-CoA.</text>
</comment>
<comment type="catalytic activity">
    <reaction evidence="1">
        <text>N(6)-carboxybiotinyl-L-lysyl-[protein] + acetyl-CoA = N(6)-biotinyl-L-lysyl-[protein] + malonyl-CoA</text>
        <dbReference type="Rhea" id="RHEA:54728"/>
        <dbReference type="Rhea" id="RHEA-COMP:10505"/>
        <dbReference type="Rhea" id="RHEA-COMP:10506"/>
        <dbReference type="ChEBI" id="CHEBI:57288"/>
        <dbReference type="ChEBI" id="CHEBI:57384"/>
        <dbReference type="ChEBI" id="CHEBI:83144"/>
        <dbReference type="ChEBI" id="CHEBI:83145"/>
        <dbReference type="EC" id="2.1.3.15"/>
    </reaction>
</comment>
<comment type="pathway">
    <text evidence="1">Lipid metabolism; malonyl-CoA biosynthesis; malonyl-CoA from acetyl-CoA: step 1/1.</text>
</comment>
<comment type="subunit">
    <text evidence="1">Acetyl-CoA carboxylase is a heterohexamer composed of biotin carboxyl carrier protein (AccB), biotin carboxylase (AccC) and two subunits each of ACCase subunit alpha (AccA) and ACCase subunit beta (AccD).</text>
</comment>
<comment type="subcellular location">
    <subcellularLocation>
        <location evidence="1">Cytoplasm</location>
    </subcellularLocation>
</comment>
<comment type="similarity">
    <text evidence="1">Belongs to the AccD/PCCB family.</text>
</comment>
<name>ACCD_BEII9</name>
<gene>
    <name evidence="1" type="primary">accD</name>
    <name type="ordered locus">Bind_1987</name>
</gene>
<accession>B2IF45</accession>
<feature type="chain" id="PRO_0000389695" description="Acetyl-coenzyme A carboxylase carboxyl transferase subunit beta">
    <location>
        <begin position="1"/>
        <end position="289"/>
    </location>
</feature>
<feature type="domain" description="CoA carboxyltransferase N-terminal" evidence="2">
    <location>
        <begin position="24"/>
        <end position="289"/>
    </location>
</feature>
<keyword id="KW-0067">ATP-binding</keyword>
<keyword id="KW-0963">Cytoplasm</keyword>
<keyword id="KW-0275">Fatty acid biosynthesis</keyword>
<keyword id="KW-0276">Fatty acid metabolism</keyword>
<keyword id="KW-0444">Lipid biosynthesis</keyword>
<keyword id="KW-0443">Lipid metabolism</keyword>
<keyword id="KW-0547">Nucleotide-binding</keyword>
<keyword id="KW-1185">Reference proteome</keyword>
<keyword id="KW-0808">Transferase</keyword>
<protein>
    <recommendedName>
        <fullName evidence="1">Acetyl-coenzyme A carboxylase carboxyl transferase subunit beta</fullName>
        <shortName evidence="1">ACCase subunit beta</shortName>
        <shortName evidence="1">Acetyl-CoA carboxylase carboxyltransferase subunit beta</shortName>
        <ecNumber evidence="1">2.1.3.15</ecNumber>
    </recommendedName>
</protein>